<proteinExistence type="inferred from homology"/>
<sequence>MQRTLGGTNRKRKRTSGFRARMRTPDGRNVIRARRKRGRHRLSV</sequence>
<keyword id="KW-0687">Ribonucleoprotein</keyword>
<keyword id="KW-0689">Ribosomal protein</keyword>
<name>RL34_TRIV2</name>
<accession>Q3M7J7</accession>
<organism>
    <name type="scientific">Trichormus variabilis (strain ATCC 29413 / PCC 7937)</name>
    <name type="common">Anabaena variabilis</name>
    <dbReference type="NCBI Taxonomy" id="240292"/>
    <lineage>
        <taxon>Bacteria</taxon>
        <taxon>Bacillati</taxon>
        <taxon>Cyanobacteriota</taxon>
        <taxon>Cyanophyceae</taxon>
        <taxon>Nostocales</taxon>
        <taxon>Nostocaceae</taxon>
        <taxon>Trichormus</taxon>
    </lineage>
</organism>
<feature type="chain" id="PRO_1000013272" description="Large ribosomal subunit protein bL34">
    <location>
        <begin position="1"/>
        <end position="44"/>
    </location>
</feature>
<feature type="region of interest" description="Disordered" evidence="2">
    <location>
        <begin position="1"/>
        <end position="26"/>
    </location>
</feature>
<feature type="compositionally biased region" description="Basic residues" evidence="2">
    <location>
        <begin position="9"/>
        <end position="22"/>
    </location>
</feature>
<gene>
    <name evidence="1" type="primary">rpmH</name>
    <name evidence="1" type="synonym">rpl34</name>
    <name type="ordered locus">Ava_3432</name>
</gene>
<reference key="1">
    <citation type="journal article" date="2014" name="Stand. Genomic Sci.">
        <title>Complete genome sequence of Anabaena variabilis ATCC 29413.</title>
        <authorList>
            <person name="Thiel T."/>
            <person name="Pratte B.S."/>
            <person name="Zhong J."/>
            <person name="Goodwin L."/>
            <person name="Copeland A."/>
            <person name="Lucas S."/>
            <person name="Han C."/>
            <person name="Pitluck S."/>
            <person name="Land M.L."/>
            <person name="Kyrpides N.C."/>
            <person name="Woyke T."/>
        </authorList>
    </citation>
    <scope>NUCLEOTIDE SEQUENCE [LARGE SCALE GENOMIC DNA]</scope>
    <source>
        <strain>ATCC 29413 / PCC 7937</strain>
    </source>
</reference>
<comment type="similarity">
    <text evidence="1">Belongs to the bacterial ribosomal protein bL34 family.</text>
</comment>
<protein>
    <recommendedName>
        <fullName evidence="1">Large ribosomal subunit protein bL34</fullName>
    </recommendedName>
    <alternativeName>
        <fullName evidence="3">50S ribosomal protein L34</fullName>
    </alternativeName>
</protein>
<evidence type="ECO:0000255" key="1">
    <source>
        <dbReference type="HAMAP-Rule" id="MF_00391"/>
    </source>
</evidence>
<evidence type="ECO:0000256" key="2">
    <source>
        <dbReference type="SAM" id="MobiDB-lite"/>
    </source>
</evidence>
<evidence type="ECO:0000305" key="3"/>
<dbReference type="EMBL" id="CP000117">
    <property type="protein sequence ID" value="ABA23039.1"/>
    <property type="molecule type" value="Genomic_DNA"/>
</dbReference>
<dbReference type="SMR" id="Q3M7J7"/>
<dbReference type="STRING" id="240292.Ava_3432"/>
<dbReference type="KEGG" id="ava:Ava_3432"/>
<dbReference type="eggNOG" id="COG0230">
    <property type="taxonomic scope" value="Bacteria"/>
</dbReference>
<dbReference type="HOGENOM" id="CLU_129938_2_0_3"/>
<dbReference type="Proteomes" id="UP000002533">
    <property type="component" value="Chromosome"/>
</dbReference>
<dbReference type="GO" id="GO:1990904">
    <property type="term" value="C:ribonucleoprotein complex"/>
    <property type="evidence" value="ECO:0007669"/>
    <property type="project" value="UniProtKB-KW"/>
</dbReference>
<dbReference type="GO" id="GO:0005840">
    <property type="term" value="C:ribosome"/>
    <property type="evidence" value="ECO:0007669"/>
    <property type="project" value="UniProtKB-KW"/>
</dbReference>
<dbReference type="GO" id="GO:0003735">
    <property type="term" value="F:structural constituent of ribosome"/>
    <property type="evidence" value="ECO:0007669"/>
    <property type="project" value="InterPro"/>
</dbReference>
<dbReference type="GO" id="GO:0006412">
    <property type="term" value="P:translation"/>
    <property type="evidence" value="ECO:0007669"/>
    <property type="project" value="UniProtKB-UniRule"/>
</dbReference>
<dbReference type="Gene3D" id="1.10.287.3980">
    <property type="match status" value="1"/>
</dbReference>
<dbReference type="HAMAP" id="MF_00391">
    <property type="entry name" value="Ribosomal_bL34"/>
    <property type="match status" value="1"/>
</dbReference>
<dbReference type="InterPro" id="IPR000271">
    <property type="entry name" value="Ribosomal_bL34"/>
</dbReference>
<dbReference type="InterPro" id="IPR020939">
    <property type="entry name" value="Ribosomal_bL34_CS"/>
</dbReference>
<dbReference type="NCBIfam" id="TIGR01030">
    <property type="entry name" value="rpmH_bact"/>
    <property type="match status" value="1"/>
</dbReference>
<dbReference type="Pfam" id="PF00468">
    <property type="entry name" value="Ribosomal_L34"/>
    <property type="match status" value="1"/>
</dbReference>
<dbReference type="PROSITE" id="PS00784">
    <property type="entry name" value="RIBOSOMAL_L34"/>
    <property type="match status" value="1"/>
</dbReference>